<protein>
    <recommendedName>
        <fullName evidence="1">Large ribosomal subunit protein uL6</fullName>
    </recommendedName>
    <alternativeName>
        <fullName evidence="2">50S ribosomal protein L6</fullName>
    </alternativeName>
</protein>
<reference key="1">
    <citation type="journal article" date="2007" name="Genome Res.">
        <title>Genome sequence of a proteolytic (Group I) Clostridium botulinum strain Hall A and comparative analysis of the clostridial genomes.</title>
        <authorList>
            <person name="Sebaihia M."/>
            <person name="Peck M.W."/>
            <person name="Minton N.P."/>
            <person name="Thomson N.R."/>
            <person name="Holden M.T.G."/>
            <person name="Mitchell W.J."/>
            <person name="Carter A.T."/>
            <person name="Bentley S.D."/>
            <person name="Mason D.R."/>
            <person name="Crossman L."/>
            <person name="Paul C.J."/>
            <person name="Ivens A."/>
            <person name="Wells-Bennik M.H.J."/>
            <person name="Davis I.J."/>
            <person name="Cerdeno-Tarraga A.M."/>
            <person name="Churcher C."/>
            <person name="Quail M.A."/>
            <person name="Chillingworth T."/>
            <person name="Feltwell T."/>
            <person name="Fraser A."/>
            <person name="Goodhead I."/>
            <person name="Hance Z."/>
            <person name="Jagels K."/>
            <person name="Larke N."/>
            <person name="Maddison M."/>
            <person name="Moule S."/>
            <person name="Mungall K."/>
            <person name="Norbertczak H."/>
            <person name="Rabbinowitsch E."/>
            <person name="Sanders M."/>
            <person name="Simmonds M."/>
            <person name="White B."/>
            <person name="Whithead S."/>
            <person name="Parkhill J."/>
        </authorList>
    </citation>
    <scope>NUCLEOTIDE SEQUENCE [LARGE SCALE GENOMIC DNA]</scope>
    <source>
        <strain>Hall / ATCC 3502 / NCTC 13319 / Type A</strain>
    </source>
</reference>
<reference key="2">
    <citation type="journal article" date="2007" name="PLoS ONE">
        <title>Analysis of the neurotoxin complex genes in Clostridium botulinum A1-A4 and B1 strains: BoNT/A3, /Ba4 and /B1 clusters are located within plasmids.</title>
        <authorList>
            <person name="Smith T.J."/>
            <person name="Hill K.K."/>
            <person name="Foley B.T."/>
            <person name="Detter J.C."/>
            <person name="Munk A.C."/>
            <person name="Bruce D.C."/>
            <person name="Doggett N.A."/>
            <person name="Smith L.A."/>
            <person name="Marks J.D."/>
            <person name="Xie G."/>
            <person name="Brettin T.S."/>
        </authorList>
    </citation>
    <scope>NUCLEOTIDE SEQUENCE [LARGE SCALE GENOMIC DNA]</scope>
    <source>
        <strain>Hall / ATCC 3502 / NCTC 13319 / Type A</strain>
    </source>
</reference>
<comment type="function">
    <text evidence="1">This protein binds to the 23S rRNA, and is important in its secondary structure. It is located near the subunit interface in the base of the L7/L12 stalk, and near the tRNA binding site of the peptidyltransferase center.</text>
</comment>
<comment type="subunit">
    <text evidence="1">Part of the 50S ribosomal subunit.</text>
</comment>
<comment type="similarity">
    <text evidence="1">Belongs to the universal ribosomal protein uL6 family.</text>
</comment>
<gene>
    <name evidence="1" type="primary">rplF</name>
    <name type="ordered locus">CBO3466</name>
    <name type="ordered locus">CLC_3410</name>
</gene>
<proteinExistence type="inferred from homology"/>
<dbReference type="EMBL" id="CP000727">
    <property type="protein sequence ID" value="ABS39183.1"/>
    <property type="molecule type" value="Genomic_DNA"/>
</dbReference>
<dbReference type="EMBL" id="AM412317">
    <property type="protein sequence ID" value="CAL85026.1"/>
    <property type="molecule type" value="Genomic_DNA"/>
</dbReference>
<dbReference type="RefSeq" id="WP_003357306.1">
    <property type="nucleotide sequence ID" value="NC_009698.1"/>
</dbReference>
<dbReference type="RefSeq" id="YP_001255947.1">
    <property type="nucleotide sequence ID" value="NC_009495.1"/>
</dbReference>
<dbReference type="RefSeq" id="YP_001389188.1">
    <property type="nucleotide sequence ID" value="NC_009698.1"/>
</dbReference>
<dbReference type="SMR" id="A5I7J1"/>
<dbReference type="GeneID" id="5187721"/>
<dbReference type="KEGG" id="cbh:CLC_3410"/>
<dbReference type="KEGG" id="cbo:CBO3466"/>
<dbReference type="PATRIC" id="fig|413999.7.peg.3442"/>
<dbReference type="HOGENOM" id="CLU_065464_1_2_9"/>
<dbReference type="PRO" id="PR:A5I7J1"/>
<dbReference type="Proteomes" id="UP000001986">
    <property type="component" value="Chromosome"/>
</dbReference>
<dbReference type="GO" id="GO:0022625">
    <property type="term" value="C:cytosolic large ribosomal subunit"/>
    <property type="evidence" value="ECO:0000318"/>
    <property type="project" value="GO_Central"/>
</dbReference>
<dbReference type="GO" id="GO:0019843">
    <property type="term" value="F:rRNA binding"/>
    <property type="evidence" value="ECO:0007669"/>
    <property type="project" value="UniProtKB-UniRule"/>
</dbReference>
<dbReference type="GO" id="GO:0003735">
    <property type="term" value="F:structural constituent of ribosome"/>
    <property type="evidence" value="ECO:0000318"/>
    <property type="project" value="GO_Central"/>
</dbReference>
<dbReference type="GO" id="GO:0002181">
    <property type="term" value="P:cytoplasmic translation"/>
    <property type="evidence" value="ECO:0000318"/>
    <property type="project" value="GO_Central"/>
</dbReference>
<dbReference type="FunFam" id="3.90.930.12:FF:000001">
    <property type="entry name" value="50S ribosomal protein L6"/>
    <property type="match status" value="1"/>
</dbReference>
<dbReference type="FunFam" id="3.90.930.12:FF:000002">
    <property type="entry name" value="50S ribosomal protein L6"/>
    <property type="match status" value="1"/>
</dbReference>
<dbReference type="Gene3D" id="3.90.930.12">
    <property type="entry name" value="Ribosomal protein L6, alpha-beta domain"/>
    <property type="match status" value="2"/>
</dbReference>
<dbReference type="HAMAP" id="MF_01365_B">
    <property type="entry name" value="Ribosomal_uL6_B"/>
    <property type="match status" value="1"/>
</dbReference>
<dbReference type="InterPro" id="IPR000702">
    <property type="entry name" value="Ribosomal_uL6-like"/>
</dbReference>
<dbReference type="InterPro" id="IPR036789">
    <property type="entry name" value="Ribosomal_uL6-like_a/b-dom_sf"/>
</dbReference>
<dbReference type="InterPro" id="IPR020040">
    <property type="entry name" value="Ribosomal_uL6_a/b-dom"/>
</dbReference>
<dbReference type="InterPro" id="IPR019906">
    <property type="entry name" value="Ribosomal_uL6_bac-type"/>
</dbReference>
<dbReference type="InterPro" id="IPR002358">
    <property type="entry name" value="Ribosomal_uL6_CS"/>
</dbReference>
<dbReference type="NCBIfam" id="TIGR03654">
    <property type="entry name" value="L6_bact"/>
    <property type="match status" value="1"/>
</dbReference>
<dbReference type="PANTHER" id="PTHR11655">
    <property type="entry name" value="60S/50S RIBOSOMAL PROTEIN L6/L9"/>
    <property type="match status" value="1"/>
</dbReference>
<dbReference type="PANTHER" id="PTHR11655:SF14">
    <property type="entry name" value="LARGE RIBOSOMAL SUBUNIT PROTEIN UL6M"/>
    <property type="match status" value="1"/>
</dbReference>
<dbReference type="Pfam" id="PF00347">
    <property type="entry name" value="Ribosomal_L6"/>
    <property type="match status" value="2"/>
</dbReference>
<dbReference type="PIRSF" id="PIRSF002162">
    <property type="entry name" value="Ribosomal_L6"/>
    <property type="match status" value="1"/>
</dbReference>
<dbReference type="PRINTS" id="PR00059">
    <property type="entry name" value="RIBOSOMALL6"/>
</dbReference>
<dbReference type="SUPFAM" id="SSF56053">
    <property type="entry name" value="Ribosomal protein L6"/>
    <property type="match status" value="2"/>
</dbReference>
<dbReference type="PROSITE" id="PS00525">
    <property type="entry name" value="RIBOSOMAL_L6_1"/>
    <property type="match status" value="1"/>
</dbReference>
<name>RL6_CLOBH</name>
<evidence type="ECO:0000255" key="1">
    <source>
        <dbReference type="HAMAP-Rule" id="MF_01365"/>
    </source>
</evidence>
<evidence type="ECO:0000305" key="2"/>
<feature type="chain" id="PRO_1000055221" description="Large ribosomal subunit protein uL6">
    <location>
        <begin position="1"/>
        <end position="180"/>
    </location>
</feature>
<sequence>MSRVGKLPVAIPNGVTVTVTPDNVVTVKGPKGELVKAMSNKINIAVEDNSVVVTRDNDHKDVRALHGLTRALVNNMVTGVNEGYVKTLELIGVGYRAQLQGKKLVLSLGFSHPVEMEAVSGVEFEVEGGTKVKVKGIDKELVGAVAADIRKWRKPEPYKGKGIKYENEVIRRKEGKTGKK</sequence>
<accession>A5I7J1</accession>
<accession>A7G8S3</accession>
<organism>
    <name type="scientific">Clostridium botulinum (strain Hall / ATCC 3502 / NCTC 13319 / Type A)</name>
    <dbReference type="NCBI Taxonomy" id="441771"/>
    <lineage>
        <taxon>Bacteria</taxon>
        <taxon>Bacillati</taxon>
        <taxon>Bacillota</taxon>
        <taxon>Clostridia</taxon>
        <taxon>Eubacteriales</taxon>
        <taxon>Clostridiaceae</taxon>
        <taxon>Clostridium</taxon>
    </lineage>
</organism>
<keyword id="KW-1185">Reference proteome</keyword>
<keyword id="KW-0687">Ribonucleoprotein</keyword>
<keyword id="KW-0689">Ribosomal protein</keyword>
<keyword id="KW-0694">RNA-binding</keyword>
<keyword id="KW-0699">rRNA-binding</keyword>